<proteinExistence type="inferred from homology"/>
<dbReference type="EC" id="4.1.99.17" evidence="1"/>
<dbReference type="EMBL" id="CP000821">
    <property type="protein sequence ID" value="ABV36622.1"/>
    <property type="molecule type" value="Genomic_DNA"/>
</dbReference>
<dbReference type="RefSeq" id="WP_012142357.1">
    <property type="nucleotide sequence ID" value="NC_009831.1"/>
</dbReference>
<dbReference type="SMR" id="A8FUU9"/>
<dbReference type="STRING" id="425104.Ssed_2013"/>
<dbReference type="KEGG" id="sse:Ssed_2013"/>
<dbReference type="eggNOG" id="COG0422">
    <property type="taxonomic scope" value="Bacteria"/>
</dbReference>
<dbReference type="HOGENOM" id="CLU_013181_2_1_6"/>
<dbReference type="UniPathway" id="UPA00060"/>
<dbReference type="Proteomes" id="UP000002015">
    <property type="component" value="Chromosome"/>
</dbReference>
<dbReference type="GO" id="GO:0005829">
    <property type="term" value="C:cytosol"/>
    <property type="evidence" value="ECO:0007669"/>
    <property type="project" value="TreeGrafter"/>
</dbReference>
<dbReference type="GO" id="GO:0051539">
    <property type="term" value="F:4 iron, 4 sulfur cluster binding"/>
    <property type="evidence" value="ECO:0007669"/>
    <property type="project" value="UniProtKB-KW"/>
</dbReference>
<dbReference type="GO" id="GO:0016830">
    <property type="term" value="F:carbon-carbon lyase activity"/>
    <property type="evidence" value="ECO:0007669"/>
    <property type="project" value="InterPro"/>
</dbReference>
<dbReference type="GO" id="GO:0008270">
    <property type="term" value="F:zinc ion binding"/>
    <property type="evidence" value="ECO:0007669"/>
    <property type="project" value="UniProtKB-UniRule"/>
</dbReference>
<dbReference type="GO" id="GO:0009228">
    <property type="term" value="P:thiamine biosynthetic process"/>
    <property type="evidence" value="ECO:0007669"/>
    <property type="project" value="UniProtKB-KW"/>
</dbReference>
<dbReference type="GO" id="GO:0009229">
    <property type="term" value="P:thiamine diphosphate biosynthetic process"/>
    <property type="evidence" value="ECO:0007669"/>
    <property type="project" value="UniProtKB-UniRule"/>
</dbReference>
<dbReference type="FunFam" id="3.20.20.540:FF:000001">
    <property type="entry name" value="Phosphomethylpyrimidine synthase"/>
    <property type="match status" value="1"/>
</dbReference>
<dbReference type="Gene3D" id="6.10.250.620">
    <property type="match status" value="1"/>
</dbReference>
<dbReference type="Gene3D" id="3.20.20.540">
    <property type="entry name" value="Radical SAM ThiC family, central domain"/>
    <property type="match status" value="1"/>
</dbReference>
<dbReference type="HAMAP" id="MF_00089">
    <property type="entry name" value="ThiC"/>
    <property type="match status" value="1"/>
</dbReference>
<dbReference type="InterPro" id="IPR037509">
    <property type="entry name" value="ThiC"/>
</dbReference>
<dbReference type="InterPro" id="IPR025747">
    <property type="entry name" value="ThiC-associated_dom"/>
</dbReference>
<dbReference type="InterPro" id="IPR038521">
    <property type="entry name" value="ThiC/Bza_core_dom"/>
</dbReference>
<dbReference type="InterPro" id="IPR002817">
    <property type="entry name" value="ThiC/BzaA/B"/>
</dbReference>
<dbReference type="NCBIfam" id="NF006763">
    <property type="entry name" value="PRK09284.1"/>
    <property type="match status" value="1"/>
</dbReference>
<dbReference type="NCBIfam" id="NF009895">
    <property type="entry name" value="PRK13352.1"/>
    <property type="match status" value="1"/>
</dbReference>
<dbReference type="NCBIfam" id="TIGR00190">
    <property type="entry name" value="thiC"/>
    <property type="match status" value="1"/>
</dbReference>
<dbReference type="PANTHER" id="PTHR30557:SF1">
    <property type="entry name" value="PHOSPHOMETHYLPYRIMIDINE SYNTHASE, CHLOROPLASTIC"/>
    <property type="match status" value="1"/>
</dbReference>
<dbReference type="PANTHER" id="PTHR30557">
    <property type="entry name" value="THIAMINE BIOSYNTHESIS PROTEIN THIC"/>
    <property type="match status" value="1"/>
</dbReference>
<dbReference type="Pfam" id="PF13667">
    <property type="entry name" value="ThiC-associated"/>
    <property type="match status" value="1"/>
</dbReference>
<dbReference type="Pfam" id="PF01964">
    <property type="entry name" value="ThiC_Rad_SAM"/>
    <property type="match status" value="1"/>
</dbReference>
<dbReference type="SFLD" id="SFLDF00407">
    <property type="entry name" value="phosphomethylpyrimidine_syntha"/>
    <property type="match status" value="1"/>
</dbReference>
<dbReference type="SFLD" id="SFLDG01114">
    <property type="entry name" value="phosphomethylpyrimidine_syntha"/>
    <property type="match status" value="1"/>
</dbReference>
<dbReference type="SFLD" id="SFLDS00113">
    <property type="entry name" value="Radical_SAM_Phosphomethylpyrim"/>
    <property type="match status" value="1"/>
</dbReference>
<keyword id="KW-0004">4Fe-4S</keyword>
<keyword id="KW-0408">Iron</keyword>
<keyword id="KW-0411">Iron-sulfur</keyword>
<keyword id="KW-0456">Lyase</keyword>
<keyword id="KW-0479">Metal-binding</keyword>
<keyword id="KW-1185">Reference proteome</keyword>
<keyword id="KW-0949">S-adenosyl-L-methionine</keyword>
<keyword id="KW-0784">Thiamine biosynthesis</keyword>
<keyword id="KW-0862">Zinc</keyword>
<accession>A8FUU9</accession>
<protein>
    <recommendedName>
        <fullName evidence="1">Phosphomethylpyrimidine synthase</fullName>
        <ecNumber evidence="1">4.1.99.17</ecNumber>
    </recommendedName>
    <alternativeName>
        <fullName evidence="1">Hydroxymethylpyrimidine phosphate synthase</fullName>
        <shortName evidence="1">HMP-P synthase</shortName>
        <shortName evidence="1">HMP-phosphate synthase</shortName>
        <shortName evidence="1">HMPP synthase</shortName>
    </alternativeName>
    <alternativeName>
        <fullName evidence="1">Thiamine biosynthesis protein ThiC</fullName>
    </alternativeName>
</protein>
<feature type="chain" id="PRO_1000075448" description="Phosphomethylpyrimidine synthase">
    <location>
        <begin position="1"/>
        <end position="652"/>
    </location>
</feature>
<feature type="binding site" evidence="1">
    <location>
        <position position="235"/>
    </location>
    <ligand>
        <name>substrate</name>
    </ligand>
</feature>
<feature type="binding site" evidence="1">
    <location>
        <position position="264"/>
    </location>
    <ligand>
        <name>substrate</name>
    </ligand>
</feature>
<feature type="binding site" evidence="1">
    <location>
        <position position="293"/>
    </location>
    <ligand>
        <name>substrate</name>
    </ligand>
</feature>
<feature type="binding site" evidence="1">
    <location>
        <position position="329"/>
    </location>
    <ligand>
        <name>substrate</name>
    </ligand>
</feature>
<feature type="binding site" evidence="1">
    <location>
        <begin position="349"/>
        <end position="351"/>
    </location>
    <ligand>
        <name>substrate</name>
    </ligand>
</feature>
<feature type="binding site" evidence="1">
    <location>
        <begin position="390"/>
        <end position="393"/>
    </location>
    <ligand>
        <name>substrate</name>
    </ligand>
</feature>
<feature type="binding site" evidence="1">
    <location>
        <position position="429"/>
    </location>
    <ligand>
        <name>substrate</name>
    </ligand>
</feature>
<feature type="binding site" evidence="1">
    <location>
        <position position="433"/>
    </location>
    <ligand>
        <name>Zn(2+)</name>
        <dbReference type="ChEBI" id="CHEBI:29105"/>
    </ligand>
</feature>
<feature type="binding site" evidence="1">
    <location>
        <position position="456"/>
    </location>
    <ligand>
        <name>substrate</name>
    </ligand>
</feature>
<feature type="binding site" evidence="1">
    <location>
        <position position="497"/>
    </location>
    <ligand>
        <name>Zn(2+)</name>
        <dbReference type="ChEBI" id="CHEBI:29105"/>
    </ligand>
</feature>
<feature type="binding site" evidence="1">
    <location>
        <position position="577"/>
    </location>
    <ligand>
        <name>[4Fe-4S] cluster</name>
        <dbReference type="ChEBI" id="CHEBI:49883"/>
        <note>4Fe-4S-S-AdoMet</note>
    </ligand>
</feature>
<feature type="binding site" evidence="1">
    <location>
        <position position="580"/>
    </location>
    <ligand>
        <name>[4Fe-4S] cluster</name>
        <dbReference type="ChEBI" id="CHEBI:49883"/>
        <note>4Fe-4S-S-AdoMet</note>
    </ligand>
</feature>
<feature type="binding site" evidence="1">
    <location>
        <position position="585"/>
    </location>
    <ligand>
        <name>[4Fe-4S] cluster</name>
        <dbReference type="ChEBI" id="CHEBI:49883"/>
        <note>4Fe-4S-S-AdoMet</note>
    </ligand>
</feature>
<reference key="1">
    <citation type="submission" date="2007-08" db="EMBL/GenBank/DDBJ databases">
        <title>Complete sequence of Shewanella sediminis HAW-EB3.</title>
        <authorList>
            <consortium name="US DOE Joint Genome Institute"/>
            <person name="Copeland A."/>
            <person name="Lucas S."/>
            <person name="Lapidus A."/>
            <person name="Barry K."/>
            <person name="Glavina del Rio T."/>
            <person name="Dalin E."/>
            <person name="Tice H."/>
            <person name="Pitluck S."/>
            <person name="Chertkov O."/>
            <person name="Brettin T."/>
            <person name="Bruce D."/>
            <person name="Detter J.C."/>
            <person name="Han C."/>
            <person name="Schmutz J."/>
            <person name="Larimer F."/>
            <person name="Land M."/>
            <person name="Hauser L."/>
            <person name="Kyrpides N."/>
            <person name="Kim E."/>
            <person name="Zhao J.-S."/>
            <person name="Richardson P."/>
        </authorList>
    </citation>
    <scope>NUCLEOTIDE SEQUENCE [LARGE SCALE GENOMIC DNA]</scope>
    <source>
        <strain>HAW-EB3</strain>
    </source>
</reference>
<name>THIC_SHESH</name>
<comment type="function">
    <text evidence="1">Catalyzes the synthesis of the hydroxymethylpyrimidine phosphate (HMP-P) moiety of thiamine from aminoimidazole ribotide (AIR) in a radical S-adenosyl-L-methionine (SAM)-dependent reaction.</text>
</comment>
<comment type="catalytic activity">
    <reaction evidence="1">
        <text>5-amino-1-(5-phospho-beta-D-ribosyl)imidazole + S-adenosyl-L-methionine = 4-amino-2-methyl-5-(phosphooxymethyl)pyrimidine + CO + 5'-deoxyadenosine + formate + L-methionine + 3 H(+)</text>
        <dbReference type="Rhea" id="RHEA:24840"/>
        <dbReference type="ChEBI" id="CHEBI:15378"/>
        <dbReference type="ChEBI" id="CHEBI:15740"/>
        <dbReference type="ChEBI" id="CHEBI:17245"/>
        <dbReference type="ChEBI" id="CHEBI:17319"/>
        <dbReference type="ChEBI" id="CHEBI:57844"/>
        <dbReference type="ChEBI" id="CHEBI:58354"/>
        <dbReference type="ChEBI" id="CHEBI:59789"/>
        <dbReference type="ChEBI" id="CHEBI:137981"/>
        <dbReference type="EC" id="4.1.99.17"/>
    </reaction>
</comment>
<comment type="cofactor">
    <cofactor evidence="1">
        <name>[4Fe-4S] cluster</name>
        <dbReference type="ChEBI" id="CHEBI:49883"/>
    </cofactor>
    <text evidence="1">Binds 1 [4Fe-4S] cluster per subunit. The cluster is coordinated with 3 cysteines and an exchangeable S-adenosyl-L-methionine.</text>
</comment>
<comment type="pathway">
    <text evidence="1">Cofactor biosynthesis; thiamine diphosphate biosynthesis.</text>
</comment>
<comment type="subunit">
    <text evidence="1">Homodimer.</text>
</comment>
<comment type="similarity">
    <text evidence="1">Belongs to the ThiC family.</text>
</comment>
<gene>
    <name evidence="1" type="primary">thiC</name>
    <name type="ordered locus">Ssed_2013</name>
</gene>
<evidence type="ECO:0000255" key="1">
    <source>
        <dbReference type="HAMAP-Rule" id="MF_00089"/>
    </source>
</evidence>
<sequence length="652" mass="72762">MSTRRETRAQAQQFIDNLKPLQHPNSEKVYLVGSRDDIRVGMRQIHQSETMIGGTESHPVLESNPPLKVYDCAGPYSDPNAKINVREGLDKFRANWILERNDTEQLIAASSGFTQQRLADYGLDHLRFDSLLSPRKAKQGQCVTQLHYARQGIVTPEMEYIAIRENMALSEVTDEALTQKAEGESFGAAISQPITPEFVRQEVARGRAIIPLNINHPEAEPMIIGRNFLVKVNANIGNSAVTSSIEEEVEKLVWSTRWGADTVMDLSTGRYIHETREWIIRNSPVPIGTVPIYQALEKVNGVAEDLTWEIFRDTLLEQAEQGVDYFTIHAGVLLRYVPMTAKRLTGIVSRGGSIMAKWCLSHHLENFLYEHFRDICELCAAYDVSLSLGDGMRPGSIADANDEAQFSELETLGELVKIAWEYDVQTIIEGPGHIPMNLIKENMDKQLEVCDEAPFYTLGPQTTDIAPGYDHFTSGIGAAMIAWYGCAMLCYVTPKEHLGLPNKEDVKQGLITYKIAAHAGDVAKGHPTAQIRDNALSKARFEFRWEDQYNLGLDPDTARAYHDESLPQESAKVAHFCSMCGPKFCSMKISQEVREYAAAQEVKLHTDTEFKAKSVKESGMAQMSAEFKAKGAALYHESGALVEDVELVETEG</sequence>
<organism>
    <name type="scientific">Shewanella sediminis (strain HAW-EB3)</name>
    <dbReference type="NCBI Taxonomy" id="425104"/>
    <lineage>
        <taxon>Bacteria</taxon>
        <taxon>Pseudomonadati</taxon>
        <taxon>Pseudomonadota</taxon>
        <taxon>Gammaproteobacteria</taxon>
        <taxon>Alteromonadales</taxon>
        <taxon>Shewanellaceae</taxon>
        <taxon>Shewanella</taxon>
    </lineage>
</organism>